<keyword id="KW-0963">Cytoplasm</keyword>
<keyword id="KW-0441">Lipid A biosynthesis</keyword>
<keyword id="KW-0444">Lipid biosynthesis</keyword>
<keyword id="KW-0443">Lipid metabolism</keyword>
<keyword id="KW-0456">Lyase</keyword>
<keyword id="KW-1185">Reference proteome</keyword>
<protein>
    <recommendedName>
        <fullName evidence="1">3-hydroxyacyl-[acyl-carrier-protein] dehydratase FabZ</fullName>
        <ecNumber evidence="1">4.2.1.59</ecNumber>
    </recommendedName>
    <alternativeName>
        <fullName evidence="1">(3R)-hydroxymyristoyl-[acyl-carrier-protein] dehydratase</fullName>
        <shortName evidence="1">(3R)-hydroxymyristoyl-ACP dehydrase</shortName>
    </alternativeName>
    <alternativeName>
        <fullName evidence="1">Beta-hydroxyacyl-ACP dehydratase</fullName>
    </alternativeName>
</protein>
<organism>
    <name type="scientific">Proteus mirabilis (strain HI4320)</name>
    <dbReference type="NCBI Taxonomy" id="529507"/>
    <lineage>
        <taxon>Bacteria</taxon>
        <taxon>Pseudomonadati</taxon>
        <taxon>Pseudomonadota</taxon>
        <taxon>Gammaproteobacteria</taxon>
        <taxon>Enterobacterales</taxon>
        <taxon>Morganellaceae</taxon>
        <taxon>Proteus</taxon>
    </lineage>
</organism>
<feature type="chain" id="PRO_1000123652" description="3-hydroxyacyl-[acyl-carrier-protein] dehydratase FabZ">
    <location>
        <begin position="1"/>
        <end position="150"/>
    </location>
</feature>
<feature type="active site" evidence="1">
    <location>
        <position position="53"/>
    </location>
</feature>
<dbReference type="EC" id="4.2.1.59" evidence="1"/>
<dbReference type="EMBL" id="AM942759">
    <property type="protein sequence ID" value="CAR44498.1"/>
    <property type="molecule type" value="Genomic_DNA"/>
</dbReference>
<dbReference type="RefSeq" id="WP_004245462.1">
    <property type="nucleotide sequence ID" value="NC_010554.1"/>
</dbReference>
<dbReference type="SMR" id="B4F259"/>
<dbReference type="EnsemblBacteria" id="CAR44498">
    <property type="protein sequence ID" value="CAR44498"/>
    <property type="gene ID" value="PMI2274"/>
</dbReference>
<dbReference type="GeneID" id="6800260"/>
<dbReference type="KEGG" id="pmr:PMI2274"/>
<dbReference type="eggNOG" id="COG0764">
    <property type="taxonomic scope" value="Bacteria"/>
</dbReference>
<dbReference type="HOGENOM" id="CLU_078912_1_0_6"/>
<dbReference type="Proteomes" id="UP000008319">
    <property type="component" value="Chromosome"/>
</dbReference>
<dbReference type="GO" id="GO:0005737">
    <property type="term" value="C:cytoplasm"/>
    <property type="evidence" value="ECO:0007669"/>
    <property type="project" value="UniProtKB-SubCell"/>
</dbReference>
<dbReference type="GO" id="GO:0016020">
    <property type="term" value="C:membrane"/>
    <property type="evidence" value="ECO:0007669"/>
    <property type="project" value="GOC"/>
</dbReference>
<dbReference type="GO" id="GO:0019171">
    <property type="term" value="F:(3R)-hydroxyacyl-[acyl-carrier-protein] dehydratase activity"/>
    <property type="evidence" value="ECO:0007669"/>
    <property type="project" value="UniProtKB-EC"/>
</dbReference>
<dbReference type="GO" id="GO:0006633">
    <property type="term" value="P:fatty acid biosynthetic process"/>
    <property type="evidence" value="ECO:0007669"/>
    <property type="project" value="UniProtKB-UniRule"/>
</dbReference>
<dbReference type="GO" id="GO:0009245">
    <property type="term" value="P:lipid A biosynthetic process"/>
    <property type="evidence" value="ECO:0007669"/>
    <property type="project" value="UniProtKB-UniRule"/>
</dbReference>
<dbReference type="CDD" id="cd01288">
    <property type="entry name" value="FabZ"/>
    <property type="match status" value="1"/>
</dbReference>
<dbReference type="FunFam" id="3.10.129.10:FF:000001">
    <property type="entry name" value="3-hydroxyacyl-[acyl-carrier-protein] dehydratase FabZ"/>
    <property type="match status" value="1"/>
</dbReference>
<dbReference type="Gene3D" id="3.10.129.10">
    <property type="entry name" value="Hotdog Thioesterase"/>
    <property type="match status" value="1"/>
</dbReference>
<dbReference type="HAMAP" id="MF_00406">
    <property type="entry name" value="FabZ"/>
    <property type="match status" value="1"/>
</dbReference>
<dbReference type="InterPro" id="IPR013114">
    <property type="entry name" value="FabA_FabZ"/>
</dbReference>
<dbReference type="InterPro" id="IPR010084">
    <property type="entry name" value="FabZ"/>
</dbReference>
<dbReference type="InterPro" id="IPR029069">
    <property type="entry name" value="HotDog_dom_sf"/>
</dbReference>
<dbReference type="NCBIfam" id="TIGR01750">
    <property type="entry name" value="fabZ"/>
    <property type="match status" value="1"/>
</dbReference>
<dbReference type="NCBIfam" id="NF000582">
    <property type="entry name" value="PRK00006.1"/>
    <property type="match status" value="1"/>
</dbReference>
<dbReference type="PANTHER" id="PTHR30272">
    <property type="entry name" value="3-HYDROXYACYL-[ACYL-CARRIER-PROTEIN] DEHYDRATASE"/>
    <property type="match status" value="1"/>
</dbReference>
<dbReference type="PANTHER" id="PTHR30272:SF1">
    <property type="entry name" value="3-HYDROXYACYL-[ACYL-CARRIER-PROTEIN] DEHYDRATASE"/>
    <property type="match status" value="1"/>
</dbReference>
<dbReference type="Pfam" id="PF07977">
    <property type="entry name" value="FabA"/>
    <property type="match status" value="1"/>
</dbReference>
<dbReference type="SUPFAM" id="SSF54637">
    <property type="entry name" value="Thioesterase/thiol ester dehydrase-isomerase"/>
    <property type="match status" value="1"/>
</dbReference>
<comment type="function">
    <text evidence="1">Involved in unsaturated fatty acids biosynthesis. Catalyzes the dehydration of short chain beta-hydroxyacyl-ACPs and long chain saturated and unsaturated beta-hydroxyacyl-ACPs.</text>
</comment>
<comment type="catalytic activity">
    <reaction evidence="1">
        <text>a (3R)-hydroxyacyl-[ACP] = a (2E)-enoyl-[ACP] + H2O</text>
        <dbReference type="Rhea" id="RHEA:13097"/>
        <dbReference type="Rhea" id="RHEA-COMP:9925"/>
        <dbReference type="Rhea" id="RHEA-COMP:9945"/>
        <dbReference type="ChEBI" id="CHEBI:15377"/>
        <dbReference type="ChEBI" id="CHEBI:78784"/>
        <dbReference type="ChEBI" id="CHEBI:78827"/>
        <dbReference type="EC" id="4.2.1.59"/>
    </reaction>
</comment>
<comment type="subcellular location">
    <subcellularLocation>
        <location evidence="1">Cytoplasm</location>
    </subcellularLocation>
</comment>
<comment type="similarity">
    <text evidence="1">Belongs to the thioester dehydratase family. FabZ subfamily.</text>
</comment>
<proteinExistence type="inferred from homology"/>
<gene>
    <name evidence="1" type="primary">fabZ</name>
    <name type="ordered locus">PMI2274</name>
</gene>
<name>FABZ_PROMH</name>
<evidence type="ECO:0000255" key="1">
    <source>
        <dbReference type="HAMAP-Rule" id="MF_00406"/>
    </source>
</evidence>
<reference key="1">
    <citation type="journal article" date="2008" name="J. Bacteriol.">
        <title>Complete genome sequence of uropathogenic Proteus mirabilis, a master of both adherence and motility.</title>
        <authorList>
            <person name="Pearson M.M."/>
            <person name="Sebaihia M."/>
            <person name="Churcher C."/>
            <person name="Quail M.A."/>
            <person name="Seshasayee A.S."/>
            <person name="Luscombe N.M."/>
            <person name="Abdellah Z."/>
            <person name="Arrosmith C."/>
            <person name="Atkin B."/>
            <person name="Chillingworth T."/>
            <person name="Hauser H."/>
            <person name="Jagels K."/>
            <person name="Moule S."/>
            <person name="Mungall K."/>
            <person name="Norbertczak H."/>
            <person name="Rabbinowitsch E."/>
            <person name="Walker D."/>
            <person name="Whithead S."/>
            <person name="Thomson N.R."/>
            <person name="Rather P.N."/>
            <person name="Parkhill J."/>
            <person name="Mobley H.L.T."/>
        </authorList>
    </citation>
    <scope>NUCLEOTIDE SEQUENCE [LARGE SCALE GENOMIC DNA]</scope>
    <source>
        <strain>HI4320</strain>
    </source>
</reference>
<sequence length="150" mass="17001">MSDNHTLQIEEILDLLPHRYPFLLVDRVLDFEEGKFLRAVKNVSFNEPFFQGHFPGKPIFPGVLILEAMAQATGILAFKSVGKLEPGELYYFAAIDGARFKRPVLPGDQMVLEVEFIKERRGVARFKGVAKVDGEIACEAEMMCARRREV</sequence>
<accession>B4F259</accession>